<organism>
    <name type="scientific">Limosilactobacillus fermentum (strain NBRC 3956 / LMG 18251)</name>
    <name type="common">Lactobacillus fermentum</name>
    <dbReference type="NCBI Taxonomy" id="334390"/>
    <lineage>
        <taxon>Bacteria</taxon>
        <taxon>Bacillati</taxon>
        <taxon>Bacillota</taxon>
        <taxon>Bacilli</taxon>
        <taxon>Lactobacillales</taxon>
        <taxon>Lactobacillaceae</taxon>
        <taxon>Limosilactobacillus</taxon>
    </lineage>
</organism>
<evidence type="ECO:0000255" key="1">
    <source>
        <dbReference type="HAMAP-Rule" id="MF_00360"/>
    </source>
</evidence>
<evidence type="ECO:0000305" key="2"/>
<sequence length="97" mass="11179">METRKYEITYIIRPDIEESAKSELVARFDKILADNGATVVDSADWDTRRFAYQIGKYTEGTYHIVNVTADSDASLNEFDRLAKFSDDILRHMIVKRG</sequence>
<protein>
    <recommendedName>
        <fullName evidence="1">Small ribosomal subunit protein bS6</fullName>
    </recommendedName>
    <alternativeName>
        <fullName evidence="2">30S ribosomal protein S6</fullName>
    </alternativeName>
</protein>
<accession>B2GEV4</accession>
<feature type="chain" id="PRO_1000120766" description="Small ribosomal subunit protein bS6">
    <location>
        <begin position="1"/>
        <end position="97"/>
    </location>
</feature>
<comment type="function">
    <text evidence="1">Binds together with bS18 to 16S ribosomal RNA.</text>
</comment>
<comment type="similarity">
    <text evidence="1">Belongs to the bacterial ribosomal protein bS6 family.</text>
</comment>
<dbReference type="EMBL" id="AP008937">
    <property type="protein sequence ID" value="BAG26343.1"/>
    <property type="molecule type" value="Genomic_DNA"/>
</dbReference>
<dbReference type="RefSeq" id="WP_003682303.1">
    <property type="nucleotide sequence ID" value="NC_010610.1"/>
</dbReference>
<dbReference type="SMR" id="B2GEV4"/>
<dbReference type="GeneID" id="83715699"/>
<dbReference type="KEGG" id="lfe:LAF_0007"/>
<dbReference type="eggNOG" id="COG0360">
    <property type="taxonomic scope" value="Bacteria"/>
</dbReference>
<dbReference type="HOGENOM" id="CLU_113441_5_3_9"/>
<dbReference type="Proteomes" id="UP000001697">
    <property type="component" value="Chromosome"/>
</dbReference>
<dbReference type="GO" id="GO:0005737">
    <property type="term" value="C:cytoplasm"/>
    <property type="evidence" value="ECO:0007669"/>
    <property type="project" value="UniProtKB-ARBA"/>
</dbReference>
<dbReference type="GO" id="GO:1990904">
    <property type="term" value="C:ribonucleoprotein complex"/>
    <property type="evidence" value="ECO:0007669"/>
    <property type="project" value="UniProtKB-KW"/>
</dbReference>
<dbReference type="GO" id="GO:0005840">
    <property type="term" value="C:ribosome"/>
    <property type="evidence" value="ECO:0007669"/>
    <property type="project" value="UniProtKB-KW"/>
</dbReference>
<dbReference type="GO" id="GO:0070181">
    <property type="term" value="F:small ribosomal subunit rRNA binding"/>
    <property type="evidence" value="ECO:0007669"/>
    <property type="project" value="TreeGrafter"/>
</dbReference>
<dbReference type="GO" id="GO:0003735">
    <property type="term" value="F:structural constituent of ribosome"/>
    <property type="evidence" value="ECO:0007669"/>
    <property type="project" value="InterPro"/>
</dbReference>
<dbReference type="GO" id="GO:0006412">
    <property type="term" value="P:translation"/>
    <property type="evidence" value="ECO:0007669"/>
    <property type="project" value="UniProtKB-UniRule"/>
</dbReference>
<dbReference type="CDD" id="cd00473">
    <property type="entry name" value="bS6"/>
    <property type="match status" value="1"/>
</dbReference>
<dbReference type="Gene3D" id="3.30.70.60">
    <property type="match status" value="1"/>
</dbReference>
<dbReference type="HAMAP" id="MF_00360">
    <property type="entry name" value="Ribosomal_bS6"/>
    <property type="match status" value="1"/>
</dbReference>
<dbReference type="InterPro" id="IPR000529">
    <property type="entry name" value="Ribosomal_bS6"/>
</dbReference>
<dbReference type="InterPro" id="IPR035980">
    <property type="entry name" value="Ribosomal_bS6_sf"/>
</dbReference>
<dbReference type="InterPro" id="IPR020814">
    <property type="entry name" value="Ribosomal_S6_plastid/chlpt"/>
</dbReference>
<dbReference type="InterPro" id="IPR014717">
    <property type="entry name" value="Transl_elong_EF1B/ribsomal_bS6"/>
</dbReference>
<dbReference type="NCBIfam" id="TIGR00166">
    <property type="entry name" value="S6"/>
    <property type="match status" value="1"/>
</dbReference>
<dbReference type="PANTHER" id="PTHR21011">
    <property type="entry name" value="MITOCHONDRIAL 28S RIBOSOMAL PROTEIN S6"/>
    <property type="match status" value="1"/>
</dbReference>
<dbReference type="PANTHER" id="PTHR21011:SF1">
    <property type="entry name" value="SMALL RIBOSOMAL SUBUNIT PROTEIN BS6M"/>
    <property type="match status" value="1"/>
</dbReference>
<dbReference type="Pfam" id="PF01250">
    <property type="entry name" value="Ribosomal_S6"/>
    <property type="match status" value="1"/>
</dbReference>
<dbReference type="SUPFAM" id="SSF54995">
    <property type="entry name" value="Ribosomal protein S6"/>
    <property type="match status" value="1"/>
</dbReference>
<keyword id="KW-1185">Reference proteome</keyword>
<keyword id="KW-0687">Ribonucleoprotein</keyword>
<keyword id="KW-0689">Ribosomal protein</keyword>
<keyword id="KW-0694">RNA-binding</keyword>
<keyword id="KW-0699">rRNA-binding</keyword>
<proteinExistence type="inferred from homology"/>
<name>RS6_LIMF3</name>
<gene>
    <name evidence="1" type="primary">rpsF</name>
    <name type="ordered locus">LAF_0007</name>
</gene>
<reference key="1">
    <citation type="journal article" date="2008" name="DNA Res.">
        <title>Comparative genome analysis of Lactobacillus reuteri and Lactobacillus fermentum reveal a genomic island for reuterin and cobalamin production.</title>
        <authorList>
            <person name="Morita H."/>
            <person name="Toh H."/>
            <person name="Fukuda S."/>
            <person name="Horikawa H."/>
            <person name="Oshima K."/>
            <person name="Suzuki T."/>
            <person name="Murakami M."/>
            <person name="Hisamatsu S."/>
            <person name="Kato Y."/>
            <person name="Takizawa T."/>
            <person name="Fukuoka H."/>
            <person name="Yoshimura T."/>
            <person name="Itoh K."/>
            <person name="O'Sullivan D.J."/>
            <person name="McKay L.L."/>
            <person name="Ohno H."/>
            <person name="Kikuchi J."/>
            <person name="Masaoka T."/>
            <person name="Hattori M."/>
        </authorList>
    </citation>
    <scope>NUCLEOTIDE SEQUENCE [LARGE SCALE GENOMIC DNA]</scope>
    <source>
        <strain>NBRC 3956 / LMG 18251</strain>
    </source>
</reference>